<accession>O57686</accession>
<dbReference type="EMBL" id="Z97073">
    <property type="protein sequence ID" value="CAB09807.1"/>
    <property type="molecule type" value="mRNA"/>
</dbReference>
<dbReference type="SMR" id="O57686"/>
<dbReference type="GeneID" id="399078"/>
<dbReference type="KEGG" id="xla:399078"/>
<dbReference type="AGR" id="Xenbase:XB-GENE-6254630"/>
<dbReference type="CTD" id="399078"/>
<dbReference type="Xenbase" id="XB-GENE-6254630">
    <property type="gene designation" value="sumo1.L"/>
</dbReference>
<dbReference type="OrthoDB" id="442921at2759"/>
<dbReference type="Proteomes" id="UP000186698">
    <property type="component" value="Chromosome 9_10L"/>
</dbReference>
<dbReference type="Bgee" id="399078">
    <property type="expression patterns" value="Expressed in gastrula and 19 other cell types or tissues"/>
</dbReference>
<dbReference type="GO" id="GO:0005737">
    <property type="term" value="C:cytoplasm"/>
    <property type="evidence" value="ECO:0007669"/>
    <property type="project" value="UniProtKB-SubCell"/>
</dbReference>
<dbReference type="GO" id="GO:0031965">
    <property type="term" value="C:nuclear membrane"/>
    <property type="evidence" value="ECO:0007669"/>
    <property type="project" value="UniProtKB-SubCell"/>
</dbReference>
<dbReference type="GO" id="GO:0016607">
    <property type="term" value="C:nuclear speck"/>
    <property type="evidence" value="ECO:0007669"/>
    <property type="project" value="UniProtKB-SubCell"/>
</dbReference>
<dbReference type="GO" id="GO:0097165">
    <property type="term" value="C:nuclear stress granule"/>
    <property type="evidence" value="ECO:0000250"/>
    <property type="project" value="UniProtKB"/>
</dbReference>
<dbReference type="GO" id="GO:0005634">
    <property type="term" value="C:nucleus"/>
    <property type="evidence" value="ECO:0000318"/>
    <property type="project" value="GO_Central"/>
</dbReference>
<dbReference type="GO" id="GO:0005886">
    <property type="term" value="C:plasma membrane"/>
    <property type="evidence" value="ECO:0007669"/>
    <property type="project" value="UniProtKB-SubCell"/>
</dbReference>
<dbReference type="GO" id="GO:0016605">
    <property type="term" value="C:PML body"/>
    <property type="evidence" value="ECO:0007669"/>
    <property type="project" value="UniProtKB-SubCell"/>
</dbReference>
<dbReference type="GO" id="GO:0031386">
    <property type="term" value="F:protein tag activity"/>
    <property type="evidence" value="ECO:0000318"/>
    <property type="project" value="GO_Central"/>
</dbReference>
<dbReference type="GO" id="GO:0008134">
    <property type="term" value="F:transcription factor binding"/>
    <property type="evidence" value="ECO:0000250"/>
    <property type="project" value="AgBase"/>
</dbReference>
<dbReference type="GO" id="GO:0044389">
    <property type="term" value="F:ubiquitin-like protein ligase binding"/>
    <property type="evidence" value="ECO:0000318"/>
    <property type="project" value="GO_Central"/>
</dbReference>
<dbReference type="GO" id="GO:0071276">
    <property type="term" value="P:cellular response to cadmium ion"/>
    <property type="evidence" value="ECO:0000250"/>
    <property type="project" value="UniProtKB"/>
</dbReference>
<dbReference type="GO" id="GO:0034605">
    <property type="term" value="P:cellular response to heat"/>
    <property type="evidence" value="ECO:0000250"/>
    <property type="project" value="UniProtKB"/>
</dbReference>
<dbReference type="GO" id="GO:0016925">
    <property type="term" value="P:protein sumoylation"/>
    <property type="evidence" value="ECO:0000250"/>
    <property type="project" value="AgBase"/>
</dbReference>
<dbReference type="CDD" id="cd16114">
    <property type="entry name" value="Ubl_SUMO1"/>
    <property type="match status" value="1"/>
</dbReference>
<dbReference type="FunFam" id="3.10.20.90:FF:000092">
    <property type="entry name" value="Small ubiquitin-related modifier"/>
    <property type="match status" value="1"/>
</dbReference>
<dbReference type="Gene3D" id="3.10.20.90">
    <property type="entry name" value="Phosphatidylinositol 3-kinase Catalytic Subunit, Chain A, domain 1"/>
    <property type="match status" value="1"/>
</dbReference>
<dbReference type="InterPro" id="IPR022617">
    <property type="entry name" value="Rad60/SUMO-like_dom"/>
</dbReference>
<dbReference type="InterPro" id="IPR046332">
    <property type="entry name" value="SUMO1_Ubl"/>
</dbReference>
<dbReference type="InterPro" id="IPR000626">
    <property type="entry name" value="Ubiquitin-like_dom"/>
</dbReference>
<dbReference type="InterPro" id="IPR029071">
    <property type="entry name" value="Ubiquitin-like_domsf"/>
</dbReference>
<dbReference type="PANTHER" id="PTHR10562">
    <property type="entry name" value="SMALL UBIQUITIN-RELATED MODIFIER"/>
    <property type="match status" value="1"/>
</dbReference>
<dbReference type="Pfam" id="PF11976">
    <property type="entry name" value="Rad60-SLD"/>
    <property type="match status" value="1"/>
</dbReference>
<dbReference type="SMART" id="SM00213">
    <property type="entry name" value="UBQ"/>
    <property type="match status" value="1"/>
</dbReference>
<dbReference type="SUPFAM" id="SSF54236">
    <property type="entry name" value="Ubiquitin-like"/>
    <property type="match status" value="1"/>
</dbReference>
<dbReference type="PROSITE" id="PS50053">
    <property type="entry name" value="UBIQUITIN_2"/>
    <property type="match status" value="1"/>
</dbReference>
<gene>
    <name type="primary">sumo1-a</name>
</gene>
<keyword id="KW-1003">Cell membrane</keyword>
<keyword id="KW-0963">Cytoplasm</keyword>
<keyword id="KW-1017">Isopeptide bond</keyword>
<keyword id="KW-0472">Membrane</keyword>
<keyword id="KW-0539">Nucleus</keyword>
<keyword id="KW-1185">Reference proteome</keyword>
<keyword id="KW-0833">Ubl conjugation pathway</keyword>
<comment type="function">
    <text evidence="2 7">Ubiquitin-like protein that can be covalently attached to proteins as a monomer or a lysine-linked polymer (PubMed:9427648). Covalent attachment via an isopeptide bond to its substrates requires prior activation by the E1 complex sae1-sae2 and linkage to the E2 enzyme ube2i. This post-translational modification on lysine residues of proteins plays a crucial role in a number of cellular processes such as nuclear transport, DNA replication and repair, mitosis and signal transduction. Polymeric sumo1 chains are also susceptible to polyubiquitination which functions as a signal for proteasomal degradation of modified proteins (By similarity).</text>
</comment>
<comment type="subunit">
    <text evidence="2 6">Interacts with sae2, ube2i, ranbp2, pias1 and pias2 (By similarity). Covalently attached to a number of proteins including rangap1 and ranbp2 (By similarity). Interacts with sox9 and sox10 (PubMed:16256735).</text>
</comment>
<comment type="subcellular location">
    <subcellularLocation>
        <location evidence="2">Nucleus membrane</location>
    </subcellularLocation>
    <subcellularLocation>
        <location evidence="3">Nucleus speckle</location>
    </subcellularLocation>
    <subcellularLocation>
        <location evidence="2">Cytoplasm</location>
    </subcellularLocation>
    <subcellularLocation>
        <location evidence="2">Nucleus</location>
        <location evidence="2">PML body</location>
    </subcellularLocation>
    <subcellularLocation>
        <location evidence="2">Cell membrane</location>
    </subcellularLocation>
    <subcellularLocation>
        <location evidence="2">Nucleus</location>
    </subcellularLocation>
</comment>
<comment type="PTM">
    <text evidence="2">Cleavage of precursor form by a sentrin-specific protease is necessary for function.</text>
</comment>
<comment type="similarity">
    <text evidence="8">Belongs to the ubiquitin family. SUMO subfamily.</text>
</comment>
<name>SMO1A_XENLA</name>
<organism>
    <name type="scientific">Xenopus laevis</name>
    <name type="common">African clawed frog</name>
    <dbReference type="NCBI Taxonomy" id="8355"/>
    <lineage>
        <taxon>Eukaryota</taxon>
        <taxon>Metazoa</taxon>
        <taxon>Chordata</taxon>
        <taxon>Craniata</taxon>
        <taxon>Vertebrata</taxon>
        <taxon>Euteleostomi</taxon>
        <taxon>Amphibia</taxon>
        <taxon>Batrachia</taxon>
        <taxon>Anura</taxon>
        <taxon>Pipoidea</taxon>
        <taxon>Pipidae</taxon>
        <taxon>Xenopodinae</taxon>
        <taxon>Xenopus</taxon>
        <taxon>Xenopus</taxon>
    </lineage>
</organism>
<sequence>MSDQEAKPSSEDLGDKKDGGDYIKLKVIGQDSSEIHFKVKMTTHLKKLKESYRQRQGVPMNSLRFLFEGQRISDHQTPKELGMEEEDVIEVYQEQTGGHSTF</sequence>
<protein>
    <recommendedName>
        <fullName>Small ubiquitin-related modifier 1-A</fullName>
        <shortName>SUMO-1-A</shortName>
    </recommendedName>
</protein>
<feature type="chain" id="PRO_0000267618" description="Small ubiquitin-related modifier 1-A">
    <location>
        <begin position="1"/>
        <end position="98"/>
    </location>
</feature>
<feature type="propeptide" id="PRO_0000267619" evidence="1">
    <location>
        <begin position="99"/>
        <end position="102"/>
    </location>
</feature>
<feature type="domain" description="Ubiquitin-like" evidence="4">
    <location>
        <begin position="21"/>
        <end position="98"/>
    </location>
</feature>
<feature type="region of interest" description="Disordered" evidence="5">
    <location>
        <begin position="1"/>
        <end position="20"/>
    </location>
</feature>
<feature type="cross-link" description="Glycyl lysine isopeptide (Gly-Lys) (interchain with K-? in acceptor proteins)" evidence="4">
    <location>
        <position position="98"/>
    </location>
</feature>
<proteinExistence type="evidence at protein level"/>
<reference key="1">
    <citation type="journal article" date="1998" name="Curr. Biol.">
        <title>Ubc9p and the conjugation of SUMO-1 to RanGAP1 and RanBP2.</title>
        <authorList>
            <person name="Saitoh H."/>
            <person name="Sparrow D.B."/>
            <person name="Shiomi T."/>
            <person name="Pu R.T."/>
            <person name="Nishimoto T."/>
            <person name="Mohun T.J."/>
            <person name="Dasso M."/>
        </authorList>
    </citation>
    <scope>NUCLEOTIDE SEQUENCE [MRNA]</scope>
    <scope>FUNCTION</scope>
</reference>
<reference key="2">
    <citation type="journal article" date="2005" name="Dev. Cell">
        <title>SoxE factors function equivalently during neural crest and inner ear development and their activity is regulated by SUMOylation.</title>
        <authorList>
            <person name="Taylor K.M."/>
            <person name="Labonne C."/>
        </authorList>
    </citation>
    <scope>INTERACTION WITH SOX9 AND SOX10</scope>
</reference>
<evidence type="ECO:0000250" key="1"/>
<evidence type="ECO:0000250" key="2">
    <source>
        <dbReference type="UniProtKB" id="P63165"/>
    </source>
</evidence>
<evidence type="ECO:0000250" key="3">
    <source>
        <dbReference type="UniProtKB" id="P63166"/>
    </source>
</evidence>
<evidence type="ECO:0000255" key="4">
    <source>
        <dbReference type="PROSITE-ProRule" id="PRU00214"/>
    </source>
</evidence>
<evidence type="ECO:0000256" key="5">
    <source>
        <dbReference type="SAM" id="MobiDB-lite"/>
    </source>
</evidence>
<evidence type="ECO:0000269" key="6">
    <source>
    </source>
</evidence>
<evidence type="ECO:0000269" key="7">
    <source>
    </source>
</evidence>
<evidence type="ECO:0000305" key="8"/>